<reference key="1">
    <citation type="journal article" date="2007" name="Nat. Biotechnol.">
        <title>Complete genome sequence of the fish pathogen Flavobacterium psychrophilum.</title>
        <authorList>
            <person name="Duchaud E."/>
            <person name="Boussaha M."/>
            <person name="Loux V."/>
            <person name="Bernardet J.-F."/>
            <person name="Michel C."/>
            <person name="Kerouault B."/>
            <person name="Mondot S."/>
            <person name="Nicolas P."/>
            <person name="Bossy R."/>
            <person name="Caron C."/>
            <person name="Bessieres P."/>
            <person name="Gibrat J.-F."/>
            <person name="Claverol S."/>
            <person name="Dumetz F."/>
            <person name="Le Henaff M."/>
            <person name="Benmansour A."/>
        </authorList>
    </citation>
    <scope>NUCLEOTIDE SEQUENCE [LARGE SCALE GENOMIC DNA]</scope>
    <source>
        <strain>ATCC 49511 / DSM 21280 / CIP 103535 / JIP02/86</strain>
    </source>
</reference>
<protein>
    <recommendedName>
        <fullName evidence="1">Triosephosphate isomerase</fullName>
        <shortName evidence="1">TIM</shortName>
        <shortName evidence="1">TPI</shortName>
        <ecNumber evidence="1">5.3.1.1</ecNumber>
    </recommendedName>
    <alternativeName>
        <fullName evidence="1">Triose-phosphate isomerase</fullName>
    </alternativeName>
</protein>
<keyword id="KW-0963">Cytoplasm</keyword>
<keyword id="KW-0312">Gluconeogenesis</keyword>
<keyword id="KW-0324">Glycolysis</keyword>
<keyword id="KW-0413">Isomerase</keyword>
<keyword id="KW-1185">Reference proteome</keyword>
<sequence length="250" mass="27638">MRAKIVAGNWKMNKNSEETEDLINELIDKLPTNSNAKIIIAPTFINLASAVDHTEFTNIRVAAQNMHQAENGAYTGEISADMLKSIGVNTVILGHSERRAIFHETDAIISFKVDTALRHEMTVIFCFGEELKDRQNKQHFNIVENQLRDGLFHIDKSAWANIILAYEPVWAIGTGETASPEQAQEMHEFIRETVRKVFGSDIAEDVSILYGGSVKPDNAKEIFSKPDVDGGLIGGAALKADDFVVIVNGI</sequence>
<dbReference type="EC" id="5.3.1.1" evidence="1"/>
<dbReference type="EMBL" id="AM398681">
    <property type="protein sequence ID" value="CAL43505.1"/>
    <property type="molecule type" value="Genomic_DNA"/>
</dbReference>
<dbReference type="RefSeq" id="WP_011963550.1">
    <property type="nucleotide sequence ID" value="NC_009613.3"/>
</dbReference>
<dbReference type="RefSeq" id="YP_001296314.1">
    <property type="nucleotide sequence ID" value="NC_009613.3"/>
</dbReference>
<dbReference type="SMR" id="A6GZI2"/>
<dbReference type="STRING" id="402612.FP1429"/>
<dbReference type="EnsemblBacteria" id="CAL43505">
    <property type="protein sequence ID" value="CAL43505"/>
    <property type="gene ID" value="FP1429"/>
</dbReference>
<dbReference type="GeneID" id="66552888"/>
<dbReference type="KEGG" id="fps:FP1429"/>
<dbReference type="PATRIC" id="fig|402612.5.peg.1444"/>
<dbReference type="eggNOG" id="COG0149">
    <property type="taxonomic scope" value="Bacteria"/>
</dbReference>
<dbReference type="HOGENOM" id="CLU_024251_2_3_10"/>
<dbReference type="OrthoDB" id="9809429at2"/>
<dbReference type="UniPathway" id="UPA00109">
    <property type="reaction ID" value="UER00189"/>
</dbReference>
<dbReference type="UniPathway" id="UPA00138"/>
<dbReference type="Proteomes" id="UP000006394">
    <property type="component" value="Chromosome"/>
</dbReference>
<dbReference type="GO" id="GO:0005829">
    <property type="term" value="C:cytosol"/>
    <property type="evidence" value="ECO:0007669"/>
    <property type="project" value="TreeGrafter"/>
</dbReference>
<dbReference type="GO" id="GO:0004807">
    <property type="term" value="F:triose-phosphate isomerase activity"/>
    <property type="evidence" value="ECO:0007669"/>
    <property type="project" value="UniProtKB-UniRule"/>
</dbReference>
<dbReference type="GO" id="GO:0006094">
    <property type="term" value="P:gluconeogenesis"/>
    <property type="evidence" value="ECO:0007669"/>
    <property type="project" value="UniProtKB-UniRule"/>
</dbReference>
<dbReference type="GO" id="GO:0046166">
    <property type="term" value="P:glyceraldehyde-3-phosphate biosynthetic process"/>
    <property type="evidence" value="ECO:0007669"/>
    <property type="project" value="TreeGrafter"/>
</dbReference>
<dbReference type="GO" id="GO:0019563">
    <property type="term" value="P:glycerol catabolic process"/>
    <property type="evidence" value="ECO:0007669"/>
    <property type="project" value="TreeGrafter"/>
</dbReference>
<dbReference type="GO" id="GO:0006096">
    <property type="term" value="P:glycolytic process"/>
    <property type="evidence" value="ECO:0007669"/>
    <property type="project" value="UniProtKB-UniRule"/>
</dbReference>
<dbReference type="CDD" id="cd00311">
    <property type="entry name" value="TIM"/>
    <property type="match status" value="1"/>
</dbReference>
<dbReference type="FunFam" id="3.20.20.70:FF:000016">
    <property type="entry name" value="Triosephosphate isomerase"/>
    <property type="match status" value="1"/>
</dbReference>
<dbReference type="Gene3D" id="3.20.20.70">
    <property type="entry name" value="Aldolase class I"/>
    <property type="match status" value="1"/>
</dbReference>
<dbReference type="HAMAP" id="MF_00147_B">
    <property type="entry name" value="TIM_B"/>
    <property type="match status" value="1"/>
</dbReference>
<dbReference type="InterPro" id="IPR013785">
    <property type="entry name" value="Aldolase_TIM"/>
</dbReference>
<dbReference type="InterPro" id="IPR035990">
    <property type="entry name" value="TIM_sf"/>
</dbReference>
<dbReference type="InterPro" id="IPR022896">
    <property type="entry name" value="TrioseP_Isoase_bac/euk"/>
</dbReference>
<dbReference type="InterPro" id="IPR000652">
    <property type="entry name" value="Triosephosphate_isomerase"/>
</dbReference>
<dbReference type="InterPro" id="IPR020861">
    <property type="entry name" value="Triosephosphate_isomerase_AS"/>
</dbReference>
<dbReference type="NCBIfam" id="TIGR00419">
    <property type="entry name" value="tim"/>
    <property type="match status" value="1"/>
</dbReference>
<dbReference type="PANTHER" id="PTHR21139">
    <property type="entry name" value="TRIOSEPHOSPHATE ISOMERASE"/>
    <property type="match status" value="1"/>
</dbReference>
<dbReference type="PANTHER" id="PTHR21139:SF42">
    <property type="entry name" value="TRIOSEPHOSPHATE ISOMERASE"/>
    <property type="match status" value="1"/>
</dbReference>
<dbReference type="Pfam" id="PF00121">
    <property type="entry name" value="TIM"/>
    <property type="match status" value="1"/>
</dbReference>
<dbReference type="SUPFAM" id="SSF51351">
    <property type="entry name" value="Triosephosphate isomerase (TIM)"/>
    <property type="match status" value="1"/>
</dbReference>
<dbReference type="PROSITE" id="PS00171">
    <property type="entry name" value="TIM_1"/>
    <property type="match status" value="1"/>
</dbReference>
<dbReference type="PROSITE" id="PS51440">
    <property type="entry name" value="TIM_2"/>
    <property type="match status" value="1"/>
</dbReference>
<feature type="chain" id="PRO_0000307465" description="Triosephosphate isomerase">
    <location>
        <begin position="1"/>
        <end position="250"/>
    </location>
</feature>
<feature type="active site" description="Electrophile" evidence="1">
    <location>
        <position position="95"/>
    </location>
</feature>
<feature type="active site" description="Proton acceptor" evidence="1">
    <location>
        <position position="167"/>
    </location>
</feature>
<feature type="binding site" evidence="1">
    <location>
        <begin position="9"/>
        <end position="11"/>
    </location>
    <ligand>
        <name>substrate</name>
    </ligand>
</feature>
<feature type="binding site" evidence="1">
    <location>
        <position position="173"/>
    </location>
    <ligand>
        <name>substrate</name>
    </ligand>
</feature>
<feature type="binding site" evidence="1">
    <location>
        <position position="213"/>
    </location>
    <ligand>
        <name>substrate</name>
    </ligand>
</feature>
<feature type="binding site" evidence="1">
    <location>
        <begin position="234"/>
        <end position="235"/>
    </location>
    <ligand>
        <name>substrate</name>
    </ligand>
</feature>
<gene>
    <name evidence="1" type="primary">tpiA</name>
    <name type="ordered locus">FP1429</name>
</gene>
<comment type="function">
    <text evidence="1">Involved in the gluconeogenesis. Catalyzes stereospecifically the conversion of dihydroxyacetone phosphate (DHAP) to D-glyceraldehyde-3-phosphate (G3P).</text>
</comment>
<comment type="catalytic activity">
    <reaction evidence="1">
        <text>D-glyceraldehyde 3-phosphate = dihydroxyacetone phosphate</text>
        <dbReference type="Rhea" id="RHEA:18585"/>
        <dbReference type="ChEBI" id="CHEBI:57642"/>
        <dbReference type="ChEBI" id="CHEBI:59776"/>
        <dbReference type="EC" id="5.3.1.1"/>
    </reaction>
</comment>
<comment type="pathway">
    <text evidence="1">Carbohydrate biosynthesis; gluconeogenesis.</text>
</comment>
<comment type="pathway">
    <text evidence="1">Carbohydrate degradation; glycolysis; D-glyceraldehyde 3-phosphate from glycerone phosphate: step 1/1.</text>
</comment>
<comment type="subunit">
    <text evidence="1">Homodimer.</text>
</comment>
<comment type="subcellular location">
    <subcellularLocation>
        <location evidence="1">Cytoplasm</location>
    </subcellularLocation>
</comment>
<comment type="similarity">
    <text evidence="1">Belongs to the triosephosphate isomerase family.</text>
</comment>
<proteinExistence type="inferred from homology"/>
<accession>A6GZI2</accession>
<organism>
    <name type="scientific">Flavobacterium psychrophilum (strain ATCC 49511 / DSM 21280 / CIP 103535 / JIP02/86)</name>
    <dbReference type="NCBI Taxonomy" id="402612"/>
    <lineage>
        <taxon>Bacteria</taxon>
        <taxon>Pseudomonadati</taxon>
        <taxon>Bacteroidota</taxon>
        <taxon>Flavobacteriia</taxon>
        <taxon>Flavobacteriales</taxon>
        <taxon>Flavobacteriaceae</taxon>
        <taxon>Flavobacterium</taxon>
    </lineage>
</organism>
<name>TPIS_FLAPJ</name>
<evidence type="ECO:0000255" key="1">
    <source>
        <dbReference type="HAMAP-Rule" id="MF_00147"/>
    </source>
</evidence>